<name>CING_CALJA</name>
<dbReference type="EMBL" id="DP000572">
    <property type="protein sequence ID" value="ABY82100.1"/>
    <property type="molecule type" value="Genomic_DNA"/>
</dbReference>
<dbReference type="SMR" id="B0KWC9"/>
<dbReference type="FunCoup" id="B0KWC9">
    <property type="interactions" value="517"/>
</dbReference>
<dbReference type="STRING" id="9483.ENSCJAP00000014335"/>
<dbReference type="eggNOG" id="ENOG502R9EI">
    <property type="taxonomic scope" value="Eukaryota"/>
</dbReference>
<dbReference type="HOGENOM" id="CLU_002036_0_0_1"/>
<dbReference type="InParanoid" id="B0KWC9"/>
<dbReference type="Proteomes" id="UP000008225">
    <property type="component" value="Unplaced"/>
</dbReference>
<dbReference type="GO" id="GO:0005923">
    <property type="term" value="C:bicellular tight junction"/>
    <property type="evidence" value="ECO:0007669"/>
    <property type="project" value="UniProtKB-SubCell"/>
</dbReference>
<dbReference type="GO" id="GO:0016459">
    <property type="term" value="C:myosin complex"/>
    <property type="evidence" value="ECO:0007669"/>
    <property type="project" value="InterPro"/>
</dbReference>
<dbReference type="GO" id="GO:0008017">
    <property type="term" value="F:microtubule binding"/>
    <property type="evidence" value="ECO:0007669"/>
    <property type="project" value="TreeGrafter"/>
</dbReference>
<dbReference type="GO" id="GO:0000226">
    <property type="term" value="P:microtubule cytoskeleton organization"/>
    <property type="evidence" value="ECO:0007669"/>
    <property type="project" value="TreeGrafter"/>
</dbReference>
<dbReference type="InterPro" id="IPR002928">
    <property type="entry name" value="Myosin_tail"/>
</dbReference>
<dbReference type="PANTHER" id="PTHR46349:SF4">
    <property type="entry name" value="CINGULIN"/>
    <property type="match status" value="1"/>
</dbReference>
<dbReference type="PANTHER" id="PTHR46349">
    <property type="entry name" value="CINGULIN-LIKE PROTEIN 1-RELATED"/>
    <property type="match status" value="1"/>
</dbReference>
<dbReference type="Pfam" id="PF01576">
    <property type="entry name" value="Myosin_tail_1"/>
    <property type="match status" value="1"/>
</dbReference>
<protein>
    <recommendedName>
        <fullName evidence="3">Cingulin</fullName>
    </recommendedName>
</protein>
<keyword id="KW-0007">Acetylation</keyword>
<keyword id="KW-0965">Cell junction</keyword>
<keyword id="KW-0175">Coiled coil</keyword>
<keyword id="KW-0597">Phosphoprotein</keyword>
<keyword id="KW-1185">Reference proteome</keyword>
<keyword id="KW-0796">Tight junction</keyword>
<sequence>MEQAPNMAEPRGPVDHGVQIRFITEPVSGAEMGTLRRGGRRPAKDARASTYGVAVRVQGIAGQPFVVLNSGEKGGDSFGVQIKGANDQGASGALSSDSELPENPYSQVRGFPAPSQSSTSDEDPGTQWNGKLLRSQSQASLAGPGPMDPSNRSTSMLDLAPKAASPGSTIDTAPLSSVDSLINKFDSQLRGQARGRTGHRTRMLPPEQRKRSKSLDSRLPRDTLEERERQSTNHWNPNTKYDNHVGSSKQPAQSPSPSPSPLSGLSRARQTQDWVLQSFEEPQGRAQDPTMLQFKSTPDLLRDQQEAAPPGSVDHMKATIYGILREGSSESETSVRRKVSLVLEKMQPLVMMSSGSSKAVAGQGELTRKVEELQRKLDEEVKKRQKLEPSRVGLERQLEEKTEECSQLQELLERRKGEAQQSNKELQNMKRLLDQGESLRHGLETQVVELQNKLKQVQGPEPAKEVLLKDLLETRELLEEVLEGKQRVEEQLRLRERELTALKGALKEEVASRDQEVEHVRQQCQRDTEQLRKSMQDATQDHAVLEAERQKMSALVRGLQRELEETSEETGHWQSMFQKNKEELRATKQELLQLRMEKEEMEEELGEKIEVLQRELEQARASAGDTRQVEVLKKLCQTQEELKELQAERQSQEVAGRHRDRELEKQLSVLRVEADRGRELEEQNFQLQKTLQQLRQNCEEASKAKMVAEAEAAVLGQRRAAVETTLRETQEENDEFRRRILGLEQQLKETRGLVDGGEAVEARLRDKLQRLEAEKQQLEEALNASQEEEGSLAAAKRALEARLEEAQRGLARLGQEQQTLNRALEEEGKQREVLRRSKAELEEQKRLLDKTVDRLNKELEQIGEASKQALQQLQSQLEDYKEKARREVADAQRQAKDWASEAEKTSGGLNRLQDEIQRLRQALQACQAERDTAQLDKELLAQRLQGLEQEAENKKRSQDDRARQLKGLEEKVSRLEAELDEEKNTVELLTDRVNRGRDQVDQLRTELMQERSARQDLECDKISLERQNKDLKTRLASSEGFQKPSASLSQLESQNQLLQERLQAEEREKTVLQSTNRKLERKVKELSIQIEDERQHVNDQKDQLSLRVKALKRQVDEAEEEIERLDGLRKKAQRELEEQHEVNEQLQARIKSLEKDSWRKASRSAAESTLKHEGLSSDEEFDGVYDPSSIASLLTESNLQTSSC</sequence>
<organism>
    <name type="scientific">Callithrix jacchus</name>
    <name type="common">White-tufted-ear marmoset</name>
    <dbReference type="NCBI Taxonomy" id="9483"/>
    <lineage>
        <taxon>Eukaryota</taxon>
        <taxon>Metazoa</taxon>
        <taxon>Chordata</taxon>
        <taxon>Craniata</taxon>
        <taxon>Vertebrata</taxon>
        <taxon>Euteleostomi</taxon>
        <taxon>Mammalia</taxon>
        <taxon>Eutheria</taxon>
        <taxon>Euarchontoglires</taxon>
        <taxon>Primates</taxon>
        <taxon>Haplorrhini</taxon>
        <taxon>Platyrrhini</taxon>
        <taxon>Cebidae</taxon>
        <taxon>Callitrichinae</taxon>
        <taxon>Callithrix</taxon>
        <taxon>Callithrix</taxon>
    </lineage>
</organism>
<comment type="function">
    <text evidence="1">Probably plays a role in the formation and regulation of the tight junction (TJ) paracellular permeability barrier.</text>
</comment>
<comment type="subunit">
    <text evidence="3">Homodimer (By similarity). Interacts with TJP1/ZO1 and SPEF1 (By similarity).</text>
</comment>
<comment type="subcellular location">
    <subcellularLocation>
        <location evidence="2">Cell junction</location>
        <location evidence="2">Tight junction</location>
    </subcellularLocation>
    <text evidence="2 3">Localizes to the apical junction complex composed of tight and adherens junctions. Colocalizes with SPEF1 at sites of cell-cell contact in intestinal epithelial cells.</text>
</comment>
<comment type="domain">
    <text evidence="1">Deletion of the TJP1/ZO1 interaction motif (ZIM) decreases but does not abolish colocalization with TJP1/ZO1.</text>
</comment>
<comment type="similarity">
    <text evidence="6">Belongs to the cingulin family.</text>
</comment>
<comment type="caution">
    <text evidence="6">It is uncertain whether Met-1 or Met-7 is the initiator.</text>
</comment>
<proteinExistence type="inferred from homology"/>
<reference key="1">
    <citation type="submission" date="2008-01" db="EMBL/GenBank/DDBJ databases">
        <title>NISC comparative sequencing initiative.</title>
        <authorList>
            <person name="Antonellis A."/>
            <person name="Ayele K."/>
            <person name="Benjamin B."/>
            <person name="Blakesley R.W."/>
            <person name="Boakye A."/>
            <person name="Bouffard G.G."/>
            <person name="Brinkley C."/>
            <person name="Brooks S."/>
            <person name="Chu G."/>
            <person name="Coleman H."/>
            <person name="Engle J."/>
            <person name="Gestole M."/>
            <person name="Greene A."/>
            <person name="Guan X."/>
            <person name="Gupta J."/>
            <person name="Haghighi P."/>
            <person name="Han J."/>
            <person name="Hansen N."/>
            <person name="Ho S.-L."/>
            <person name="Hu P."/>
            <person name="Hunter G."/>
            <person name="Hurle B."/>
            <person name="Idol J.R."/>
            <person name="Kwong P."/>
            <person name="Laric P."/>
            <person name="Larson S."/>
            <person name="Lee-Lin S.-Q."/>
            <person name="Legaspi R."/>
            <person name="Madden M."/>
            <person name="Maduro Q.L."/>
            <person name="Maduro V.B."/>
            <person name="Margulies E.H."/>
            <person name="Masiello C."/>
            <person name="Maskeri B."/>
            <person name="McDowell J."/>
            <person name="Mojidi H.A."/>
            <person name="Mullikin J.C."/>
            <person name="Oestreicher J.S."/>
            <person name="Park M."/>
            <person name="Portnoy M.E."/>
            <person name="Prasad A."/>
            <person name="Puri O."/>
            <person name="Reddix-Dugue N."/>
            <person name="Schandler K."/>
            <person name="Schueler M.G."/>
            <person name="Sison C."/>
            <person name="Stantripop S."/>
            <person name="Stephen E."/>
            <person name="Taye A."/>
            <person name="Thomas J.W."/>
            <person name="Thomas P.J."/>
            <person name="Tsipouri V."/>
            <person name="Ung L."/>
            <person name="Vogt J.L."/>
            <person name="Wetherby K.D."/>
            <person name="Young A."/>
            <person name="Green E.D."/>
        </authorList>
    </citation>
    <scope>NUCLEOTIDE SEQUENCE [LARGE SCALE GENOMIC DNA]</scope>
</reference>
<accession>B0KWC9</accession>
<feature type="chain" id="PRO_0000371429" description="Cingulin">
    <location>
        <begin position="1"/>
        <end position="1204"/>
    </location>
</feature>
<feature type="region of interest" description="Head" evidence="1">
    <location>
        <begin position="7"/>
        <end position="359"/>
    </location>
</feature>
<feature type="region of interest" description="Disordered" evidence="5">
    <location>
        <begin position="25"/>
        <end position="48"/>
    </location>
</feature>
<feature type="region of interest" description="Interaction with TJP1/ZO1" evidence="3">
    <location>
        <begin position="54"/>
        <end position="67"/>
    </location>
</feature>
<feature type="region of interest" description="Disordered" evidence="5">
    <location>
        <begin position="68"/>
        <end position="269"/>
    </location>
</feature>
<feature type="region of interest" description="Disordered" evidence="5">
    <location>
        <begin position="1156"/>
        <end position="1182"/>
    </location>
</feature>
<feature type="region of interest" description="Tail" evidence="1">
    <location>
        <begin position="1162"/>
        <end position="1204"/>
    </location>
</feature>
<feature type="coiled-coil region" evidence="4">
    <location>
        <begin position="360"/>
        <end position="1161"/>
    </location>
</feature>
<feature type="short sequence motif" description="ZIM">
    <location>
        <begin position="48"/>
        <end position="62"/>
    </location>
</feature>
<feature type="compositionally biased region" description="Polar residues" evidence="5">
    <location>
        <begin position="126"/>
        <end position="140"/>
    </location>
</feature>
<feature type="compositionally biased region" description="Polar residues" evidence="5">
    <location>
        <begin position="166"/>
        <end position="190"/>
    </location>
</feature>
<feature type="compositionally biased region" description="Basic and acidic residues" evidence="5">
    <location>
        <begin position="207"/>
        <end position="231"/>
    </location>
</feature>
<feature type="modified residue" description="Phosphoserine" evidence="2">
    <location>
        <position position="95"/>
    </location>
</feature>
<feature type="modified residue" description="Phosphoserine" evidence="2">
    <location>
        <position position="96"/>
    </location>
</feature>
<feature type="modified residue" description="Phosphoserine" evidence="2">
    <location>
        <position position="98"/>
    </location>
</feature>
<feature type="modified residue" description="Phosphoserine" evidence="3">
    <location>
        <position position="135"/>
    </location>
</feature>
<feature type="modified residue" description="Phosphoserine" evidence="3">
    <location>
        <position position="137"/>
    </location>
</feature>
<feature type="modified residue" description="Phosphoserine" evidence="3">
    <location>
        <position position="140"/>
    </location>
</feature>
<feature type="modified residue" description="Phosphoserine" evidence="3">
    <location>
        <position position="155"/>
    </location>
</feature>
<feature type="modified residue" description="Phosphoserine" evidence="3">
    <location>
        <position position="165"/>
    </location>
</feature>
<feature type="modified residue" description="Phosphoserine" evidence="3">
    <location>
        <position position="214"/>
    </location>
</feature>
<feature type="modified residue" description="Phosphoserine" evidence="3">
    <location>
        <position position="217"/>
    </location>
</feature>
<feature type="modified residue" description="Phosphoserine" evidence="3">
    <location>
        <position position="260"/>
    </location>
</feature>
<feature type="modified residue" description="Phosphoserine" evidence="3">
    <location>
        <position position="278"/>
    </location>
</feature>
<feature type="modified residue" description="Phosphoserine" evidence="2">
    <location>
        <position position="340"/>
    </location>
</feature>
<feature type="modified residue" description="Phosphoserine" evidence="2">
    <location>
        <position position="353"/>
    </location>
</feature>
<feature type="modified residue" description="N6-acetyllysine" evidence="3">
    <location>
        <position position="581"/>
    </location>
</feature>
<feature type="modified residue" description="Phosphoserine" evidence="3">
    <location>
        <position position="1176"/>
    </location>
</feature>
<feature type="modified residue" description="Phosphoserine" evidence="3">
    <location>
        <position position="1177"/>
    </location>
</feature>
<gene>
    <name evidence="3" type="primary">CGN</name>
</gene>
<evidence type="ECO:0000250" key="1"/>
<evidence type="ECO:0000250" key="2">
    <source>
        <dbReference type="UniProtKB" id="P59242"/>
    </source>
</evidence>
<evidence type="ECO:0000250" key="3">
    <source>
        <dbReference type="UniProtKB" id="Q9P2M7"/>
    </source>
</evidence>
<evidence type="ECO:0000255" key="4"/>
<evidence type="ECO:0000256" key="5">
    <source>
        <dbReference type="SAM" id="MobiDB-lite"/>
    </source>
</evidence>
<evidence type="ECO:0000305" key="6"/>